<comment type="function">
    <text evidence="1">Interacts with the SecY protein in vivo. May bind preferentially to an uncomplexed state of SecY, thus functioning either as a chelating agent for excess SecY in the cell or as a regulatory factor that negatively controls the translocase function.</text>
</comment>
<comment type="subcellular location">
    <subcellularLocation>
        <location evidence="1">Cell inner membrane</location>
        <topology evidence="1">Peripheral membrane protein</topology>
        <orientation evidence="1">Cytoplasmic side</orientation>
    </subcellularLocation>
    <text evidence="1">Loosely associated with the cytoplasmic side of the inner membrane, probably via SecY.</text>
</comment>
<comment type="similarity">
    <text evidence="1">Belongs to the Syd family.</text>
</comment>
<accession>A1SYB4</accession>
<organism>
    <name type="scientific">Psychromonas ingrahamii (strain DSM 17664 / CCUG 51855 / 37)</name>
    <dbReference type="NCBI Taxonomy" id="357804"/>
    <lineage>
        <taxon>Bacteria</taxon>
        <taxon>Pseudomonadati</taxon>
        <taxon>Pseudomonadota</taxon>
        <taxon>Gammaproteobacteria</taxon>
        <taxon>Alteromonadales</taxon>
        <taxon>Psychromonadaceae</taxon>
        <taxon>Psychromonas</taxon>
    </lineage>
</organism>
<reference key="1">
    <citation type="journal article" date="2008" name="BMC Genomics">
        <title>Genomics of an extreme psychrophile, Psychromonas ingrahamii.</title>
        <authorList>
            <person name="Riley M."/>
            <person name="Staley J.T."/>
            <person name="Danchin A."/>
            <person name="Wang T.Z."/>
            <person name="Brettin T.S."/>
            <person name="Hauser L.J."/>
            <person name="Land M.L."/>
            <person name="Thompson L.S."/>
        </authorList>
    </citation>
    <scope>NUCLEOTIDE SEQUENCE [LARGE SCALE GENOMIC DNA]</scope>
    <source>
        <strain>DSM 17664 / CCUG 51855 / 37</strain>
    </source>
</reference>
<name>SYDP_PSYIN</name>
<feature type="chain" id="PRO_0000298256" description="Protein Syd">
    <location>
        <begin position="1"/>
        <end position="184"/>
    </location>
</feature>
<dbReference type="EMBL" id="CP000510">
    <property type="protein sequence ID" value="ABM04479.1"/>
    <property type="molecule type" value="Genomic_DNA"/>
</dbReference>
<dbReference type="RefSeq" id="WP_011771034.1">
    <property type="nucleotide sequence ID" value="NC_008709.1"/>
</dbReference>
<dbReference type="SMR" id="A1SYB4"/>
<dbReference type="STRING" id="357804.Ping_2772"/>
<dbReference type="KEGG" id="pin:Ping_2772"/>
<dbReference type="eggNOG" id="ENOG502ZCMR">
    <property type="taxonomic scope" value="Bacteria"/>
</dbReference>
<dbReference type="HOGENOM" id="CLU_121866_0_0_6"/>
<dbReference type="OrthoDB" id="5599437at2"/>
<dbReference type="Proteomes" id="UP000000639">
    <property type="component" value="Chromosome"/>
</dbReference>
<dbReference type="GO" id="GO:0009898">
    <property type="term" value="C:cytoplasmic side of plasma membrane"/>
    <property type="evidence" value="ECO:0007669"/>
    <property type="project" value="InterPro"/>
</dbReference>
<dbReference type="CDD" id="cd16323">
    <property type="entry name" value="Syd"/>
    <property type="match status" value="1"/>
</dbReference>
<dbReference type="Gene3D" id="3.40.1580.20">
    <property type="entry name" value="Syd protein"/>
    <property type="match status" value="1"/>
</dbReference>
<dbReference type="HAMAP" id="MF_01104">
    <property type="entry name" value="Syd"/>
    <property type="match status" value="1"/>
</dbReference>
<dbReference type="InterPro" id="IPR009948">
    <property type="entry name" value="Syd"/>
</dbReference>
<dbReference type="InterPro" id="IPR038228">
    <property type="entry name" value="Syd_sf"/>
</dbReference>
<dbReference type="NCBIfam" id="NF003439">
    <property type="entry name" value="PRK04968.1"/>
    <property type="match status" value="1"/>
</dbReference>
<dbReference type="Pfam" id="PF07348">
    <property type="entry name" value="Syd"/>
    <property type="match status" value="1"/>
</dbReference>
<protein>
    <recommendedName>
        <fullName evidence="1">Protein Syd</fullName>
    </recommendedName>
</protein>
<keyword id="KW-0997">Cell inner membrane</keyword>
<keyword id="KW-1003">Cell membrane</keyword>
<keyword id="KW-0472">Membrane</keyword>
<keyword id="KW-1185">Reference proteome</keyword>
<proteinExistence type="inferred from homology"/>
<gene>
    <name evidence="1" type="primary">syd</name>
    <name type="ordered locus">Ping_2772</name>
</gene>
<sequence length="184" mass="21028">MNHTTQTQLFDFFERFKAHWQTQKKSLPQAIFEPQWISPCQIGEVENQLIFWSPIKREPALDMSNIEQALDIKLHPSIVDFFCSAYSAGLPAVYQDHPIELIQAWNDEDFNLLQENMLAHFMMQKRLKQPASMFIASCSDEMQIVSVLNATGEVQLETLGKGQEAILAENLADFLATLTPVIIE</sequence>
<evidence type="ECO:0000255" key="1">
    <source>
        <dbReference type="HAMAP-Rule" id="MF_01104"/>
    </source>
</evidence>